<keyword id="KW-0175">Coiled coil</keyword>
<keyword id="KW-1185">Reference proteome</keyword>
<keyword id="KW-0732">Signal</keyword>
<gene>
    <name type="primary">yscB</name>
    <name type="ordered locus">BSU28890</name>
</gene>
<accession>P94517</accession>
<proteinExistence type="inferred from homology"/>
<dbReference type="EMBL" id="Z75208">
    <property type="protein sequence ID" value="CAA99614.1"/>
    <property type="molecule type" value="Genomic_DNA"/>
</dbReference>
<dbReference type="EMBL" id="AL009126">
    <property type="protein sequence ID" value="CAB14849.2"/>
    <property type="molecule type" value="Genomic_DNA"/>
</dbReference>
<dbReference type="PIR" id="F69983">
    <property type="entry name" value="F69983"/>
</dbReference>
<dbReference type="RefSeq" id="NP_390767.2">
    <property type="nucleotide sequence ID" value="NC_000964.3"/>
</dbReference>
<dbReference type="RefSeq" id="WP_003229484.1">
    <property type="nucleotide sequence ID" value="NZ_OZ025638.1"/>
</dbReference>
<dbReference type="RefSeq" id="WP_009967957.1">
    <property type="nucleotide sequence ID" value="NZ_CM000487.1"/>
</dbReference>
<dbReference type="SMR" id="P94517"/>
<dbReference type="FunCoup" id="P94517">
    <property type="interactions" value="92"/>
</dbReference>
<dbReference type="STRING" id="224308.BSU28890"/>
<dbReference type="PaxDb" id="224308-BSU28890"/>
<dbReference type="EnsemblBacteria" id="CAB14849">
    <property type="protein sequence ID" value="CAB14849"/>
    <property type="gene ID" value="BSU_28890"/>
</dbReference>
<dbReference type="GeneID" id="936599"/>
<dbReference type="KEGG" id="bsu:BSU28890"/>
<dbReference type="PATRIC" id="fig|224308.179.peg.3137"/>
<dbReference type="InParanoid" id="P94517"/>
<dbReference type="OrthoDB" id="2943532at2"/>
<dbReference type="BioCyc" id="BSUB:BSU28890-MONOMER"/>
<dbReference type="Proteomes" id="UP000001570">
    <property type="component" value="Chromosome"/>
</dbReference>
<name>YSCB_BACSU</name>
<organism>
    <name type="scientific">Bacillus subtilis (strain 168)</name>
    <dbReference type="NCBI Taxonomy" id="224308"/>
    <lineage>
        <taxon>Bacteria</taxon>
        <taxon>Bacillati</taxon>
        <taxon>Bacillota</taxon>
        <taxon>Bacilli</taxon>
        <taxon>Bacillales</taxon>
        <taxon>Bacillaceae</taxon>
        <taxon>Bacillus</taxon>
    </lineage>
</organism>
<evidence type="ECO:0000255" key="1"/>
<evidence type="ECO:0000256" key="2">
    <source>
        <dbReference type="SAM" id="MobiDB-lite"/>
    </source>
</evidence>
<evidence type="ECO:0000305" key="3"/>
<sequence length="221" mass="25317">MNKLIQLALFFTLMLTGCSNSSTSSESKVETTVKTTAAFPQKELEKELKKLKPVSLDMKFESPLATELGKRKAKEEAEKQRQIAAEKKLEKEREAKRKKQQEEKAERQRLAEQQAAERQRLAEAERQAELERQRQAAIQKEQKANAEKKRQSQAQRQQTEAPSSNSQDPPSSSSQTDKTIQQPASELPDDDGYGYEERKKWHDDQVEWGIKQGYIDPEDAP</sequence>
<reference key="1">
    <citation type="journal article" date="1996" name="Microbiology">
        <title>The dnaB-pheA (256 degrees-240 degrees) region of the Bacillus subtilis chromosome containing genes responsible for stress responses, the utilization of plant cell walls and primary metabolism.</title>
        <authorList>
            <person name="Wipat A."/>
            <person name="Carter N."/>
            <person name="Brignell C.S."/>
            <person name="Guy J.B."/>
            <person name="Piper K."/>
            <person name="Sanders J."/>
            <person name="Emmerson P.T."/>
            <person name="Harwood C.R."/>
        </authorList>
    </citation>
    <scope>NUCLEOTIDE SEQUENCE [GENOMIC DNA]</scope>
    <source>
        <strain>168</strain>
    </source>
</reference>
<reference key="2">
    <citation type="journal article" date="1997" name="Nature">
        <title>The complete genome sequence of the Gram-positive bacterium Bacillus subtilis.</title>
        <authorList>
            <person name="Kunst F."/>
            <person name="Ogasawara N."/>
            <person name="Moszer I."/>
            <person name="Albertini A.M."/>
            <person name="Alloni G."/>
            <person name="Azevedo V."/>
            <person name="Bertero M.G."/>
            <person name="Bessieres P."/>
            <person name="Bolotin A."/>
            <person name="Borchert S."/>
            <person name="Borriss R."/>
            <person name="Boursier L."/>
            <person name="Brans A."/>
            <person name="Braun M."/>
            <person name="Brignell S.C."/>
            <person name="Bron S."/>
            <person name="Brouillet S."/>
            <person name="Bruschi C.V."/>
            <person name="Caldwell B."/>
            <person name="Capuano V."/>
            <person name="Carter N.M."/>
            <person name="Choi S.-K."/>
            <person name="Codani J.-J."/>
            <person name="Connerton I.F."/>
            <person name="Cummings N.J."/>
            <person name="Daniel R.A."/>
            <person name="Denizot F."/>
            <person name="Devine K.M."/>
            <person name="Duesterhoeft A."/>
            <person name="Ehrlich S.D."/>
            <person name="Emmerson P.T."/>
            <person name="Entian K.-D."/>
            <person name="Errington J."/>
            <person name="Fabret C."/>
            <person name="Ferrari E."/>
            <person name="Foulger D."/>
            <person name="Fritz C."/>
            <person name="Fujita M."/>
            <person name="Fujita Y."/>
            <person name="Fuma S."/>
            <person name="Galizzi A."/>
            <person name="Galleron N."/>
            <person name="Ghim S.-Y."/>
            <person name="Glaser P."/>
            <person name="Goffeau A."/>
            <person name="Golightly E.J."/>
            <person name="Grandi G."/>
            <person name="Guiseppi G."/>
            <person name="Guy B.J."/>
            <person name="Haga K."/>
            <person name="Haiech J."/>
            <person name="Harwood C.R."/>
            <person name="Henaut A."/>
            <person name="Hilbert H."/>
            <person name="Holsappel S."/>
            <person name="Hosono S."/>
            <person name="Hullo M.-F."/>
            <person name="Itaya M."/>
            <person name="Jones L.-M."/>
            <person name="Joris B."/>
            <person name="Karamata D."/>
            <person name="Kasahara Y."/>
            <person name="Klaerr-Blanchard M."/>
            <person name="Klein C."/>
            <person name="Kobayashi Y."/>
            <person name="Koetter P."/>
            <person name="Koningstein G."/>
            <person name="Krogh S."/>
            <person name="Kumano M."/>
            <person name="Kurita K."/>
            <person name="Lapidus A."/>
            <person name="Lardinois S."/>
            <person name="Lauber J."/>
            <person name="Lazarevic V."/>
            <person name="Lee S.-M."/>
            <person name="Levine A."/>
            <person name="Liu H."/>
            <person name="Masuda S."/>
            <person name="Mauel C."/>
            <person name="Medigue C."/>
            <person name="Medina N."/>
            <person name="Mellado R.P."/>
            <person name="Mizuno M."/>
            <person name="Moestl D."/>
            <person name="Nakai S."/>
            <person name="Noback M."/>
            <person name="Noone D."/>
            <person name="O'Reilly M."/>
            <person name="Ogawa K."/>
            <person name="Ogiwara A."/>
            <person name="Oudega B."/>
            <person name="Park S.-H."/>
            <person name="Parro V."/>
            <person name="Pohl T.M."/>
            <person name="Portetelle D."/>
            <person name="Porwollik S."/>
            <person name="Prescott A.M."/>
            <person name="Presecan E."/>
            <person name="Pujic P."/>
            <person name="Purnelle B."/>
            <person name="Rapoport G."/>
            <person name="Rey M."/>
            <person name="Reynolds S."/>
            <person name="Rieger M."/>
            <person name="Rivolta C."/>
            <person name="Rocha E."/>
            <person name="Roche B."/>
            <person name="Rose M."/>
            <person name="Sadaie Y."/>
            <person name="Sato T."/>
            <person name="Scanlan E."/>
            <person name="Schleich S."/>
            <person name="Schroeter R."/>
            <person name="Scoffone F."/>
            <person name="Sekiguchi J."/>
            <person name="Sekowska A."/>
            <person name="Seror S.J."/>
            <person name="Serror P."/>
            <person name="Shin B.-S."/>
            <person name="Soldo B."/>
            <person name="Sorokin A."/>
            <person name="Tacconi E."/>
            <person name="Takagi T."/>
            <person name="Takahashi H."/>
            <person name="Takemaru K."/>
            <person name="Takeuchi M."/>
            <person name="Tamakoshi A."/>
            <person name="Tanaka T."/>
            <person name="Terpstra P."/>
            <person name="Tognoni A."/>
            <person name="Tosato V."/>
            <person name="Uchiyama S."/>
            <person name="Vandenbol M."/>
            <person name="Vannier F."/>
            <person name="Vassarotti A."/>
            <person name="Viari A."/>
            <person name="Wambutt R."/>
            <person name="Wedler E."/>
            <person name="Wedler H."/>
            <person name="Weitzenegger T."/>
            <person name="Winters P."/>
            <person name="Wipat A."/>
            <person name="Yamamoto H."/>
            <person name="Yamane K."/>
            <person name="Yasumoto K."/>
            <person name="Yata K."/>
            <person name="Yoshida K."/>
            <person name="Yoshikawa H.-F."/>
            <person name="Zumstein E."/>
            <person name="Yoshikawa H."/>
            <person name="Danchin A."/>
        </authorList>
    </citation>
    <scope>NUCLEOTIDE SEQUENCE [LARGE SCALE GENOMIC DNA]</scope>
    <source>
        <strain>168</strain>
    </source>
</reference>
<reference key="3">
    <citation type="journal article" date="2009" name="Microbiology">
        <title>From a consortium sequence to a unified sequence: the Bacillus subtilis 168 reference genome a decade later.</title>
        <authorList>
            <person name="Barbe V."/>
            <person name="Cruveiller S."/>
            <person name="Kunst F."/>
            <person name="Lenoble P."/>
            <person name="Meurice G."/>
            <person name="Sekowska A."/>
            <person name="Vallenet D."/>
            <person name="Wang T."/>
            <person name="Moszer I."/>
            <person name="Medigue C."/>
            <person name="Danchin A."/>
        </authorList>
    </citation>
    <scope>SEQUENCE REVISION TO 109-119</scope>
</reference>
<feature type="signal peptide" evidence="1">
    <location>
        <begin position="1"/>
        <end position="23"/>
    </location>
</feature>
<feature type="chain" id="PRO_0000013730" description="Uncharacterized protein YscB">
    <location>
        <begin position="24"/>
        <end position="221"/>
    </location>
</feature>
<feature type="region of interest" description="Disordered" evidence="2">
    <location>
        <begin position="67"/>
        <end position="221"/>
    </location>
</feature>
<feature type="coiled-coil region" evidence="1">
    <location>
        <begin position="70"/>
        <end position="161"/>
    </location>
</feature>
<feature type="compositionally biased region" description="Basic and acidic residues" evidence="2">
    <location>
        <begin position="68"/>
        <end position="150"/>
    </location>
</feature>
<feature type="compositionally biased region" description="Polar residues" evidence="2">
    <location>
        <begin position="152"/>
        <end position="161"/>
    </location>
</feature>
<feature type="compositionally biased region" description="Low complexity" evidence="2">
    <location>
        <begin position="162"/>
        <end position="174"/>
    </location>
</feature>
<feature type="compositionally biased region" description="Polar residues" evidence="2">
    <location>
        <begin position="175"/>
        <end position="184"/>
    </location>
</feature>
<feature type="compositionally biased region" description="Basic and acidic residues" evidence="2">
    <location>
        <begin position="195"/>
        <end position="205"/>
    </location>
</feature>
<feature type="sequence conflict" description="In Ref. 1; CAA99614." evidence="3" ref="1">
    <location>
        <begin position="109"/>
        <end position="119"/>
    </location>
</feature>
<protein>
    <recommendedName>
        <fullName>Uncharacterized protein YscB</fullName>
    </recommendedName>
</protein>